<accession>Q8LNZ2</accession>
<accession>A0A1I9LTQ9</accession>
<accession>Q8L5J2</accession>
<accession>Q8LGU3</accession>
<accession>Q9LXL3</accession>
<keyword id="KW-0067">ATP-binding</keyword>
<keyword id="KW-0131">Cell cycle</keyword>
<keyword id="KW-0132">Cell division</keyword>
<keyword id="KW-0175">Coiled coil</keyword>
<keyword id="KW-0963">Cytoplasm</keyword>
<keyword id="KW-0206">Cytoskeleton</keyword>
<keyword id="KW-0493">Microtubule</keyword>
<keyword id="KW-0505">Motor protein</keyword>
<keyword id="KW-0547">Nucleotide-binding</keyword>
<keyword id="KW-1185">Reference proteome</keyword>
<protein>
    <recommendedName>
        <fullName evidence="17">Kinesin-like protein KIN-7B</fullName>
    </recommendedName>
    <alternativeName>
        <fullName evidence="14">NPK1-activating kinesin-2</fullName>
        <shortName evidence="19">AtNACK2</shortName>
    </alternativeName>
    <alternativeName>
        <fullName evidence="13">Protein STUD</fullName>
    </alternativeName>
    <alternativeName>
        <fullName evidence="15">Protein TETRASPORE</fullName>
    </alternativeName>
</protein>
<comment type="function">
    <text evidence="5 6 7 8 9 11 12">Probable plus end-directed motor protein that functions in the NACK-PQR (ANP3-MKK6-MPK4) MAP kinase signaling pathway, which is essential for somatic cell cytokinesis, especially for the cell-plate formation and its expansion. May regulate the activity and the localization of ANP3, probably by association through the non-catalytic region of the kinase. Functionally redundant with NACK1 and essential to promote the progression of cytokinesis and for cellularization (formation of the cell plate) during microgametogenesis and megagametogenesis.</text>
</comment>
<comment type="subunit">
    <text evidence="9 10">Interacts with ANP3 (PubMed:21575092). Interacts with TIO/FU (PubMed:24146312).</text>
</comment>
<comment type="subcellular location">
    <subcellularLocation>
        <location evidence="1">Cytoplasm</location>
        <location evidence="1">Cytoskeleton</location>
        <location evidence="1">Phragmoplast</location>
    </subcellularLocation>
</comment>
<comment type="tissue specificity">
    <text evidence="6">Expressed in roots, stems, flowers, pollen mother cells and embryos.</text>
</comment>
<comment type="disruption phenotype">
    <text evidence="5 6 9 11 12">Enlarged pollen grains containing four vegetative nuclei and up to eight sperm cells. Short siliques with low fertility.</text>
</comment>
<comment type="similarity">
    <text evidence="16">Belongs to the TRAFAC class myosin-kinesin ATPase superfamily. Kinesin family. KIN-7 subfamily.</text>
</comment>
<comment type="sequence caution" evidence="17">
    <conflict type="erroneous gene model prediction">
        <sequence resource="EMBL-CDS" id="CAB89042"/>
    </conflict>
</comment>
<comment type="sequence caution" evidence="17">
    <conflict type="erroneous initiation">
        <sequence resource="EMBL-CDS" id="CAD42234"/>
    </conflict>
    <text>Truncated N-terminus.</text>
</comment>
<comment type="sequence caution" evidence="17">
    <conflict type="erroneous initiation">
        <sequence resource="EMBL-CDS" id="CAD42658"/>
    </conflict>
    <text>Truncated N-terminus.</text>
</comment>
<comment type="sequence caution" evidence="17">
    <conflict type="erroneous initiation">
        <sequence resource="EMBL-CDS" id="CAD45645"/>
    </conflict>
    <text>Truncated N-terminus.</text>
</comment>
<comment type="sequence caution" evidence="17">
    <conflict type="erroneous initiation">
        <sequence resource="EMBL-CDS" id="CAD48111"/>
    </conflict>
    <text>Truncated N-terminus.</text>
</comment>
<sequence>MMGPPRTPLSKIDKSNPYTPCGSKVTEEKILVTVRMRPLNWREHAKYDLIAWECPDDETIVFKNPNPDKAPTKYSFDKVFEPTCATQEVYEGGSRDVALSALAGTNATIFAYGQTSSGKTFTMRGVTESVVKDIYEHIRKTQERSFVLKVSALEIYNETVVDLLNRDTGPLRLLDDPEKGTIVENLVEEVVESRQHLQHLISICEDQRQVGETALNDKSSRSHQIIRLTIHSSLREIAGCVQSFMATLNLVDLAGSERAFQTNADGLRLKEGSHINRSLLTLTTVIRKLSSGRKRDHVPYRDSKLTRILQNSLGGNARTAIICTISPALSHVEQTKKTLSFAMSAKEVTNCAKVNMVVSEKKLLKHLQQKVAKLESELRSPEPSSSTCLKSLLIEKEMKIQQMESEMKELKRQRDIAQSELDLERKAKERKGSSECEPFSQVARCLSYHTKEESIPSKSVPSSRRTARDRRKDNVRQSLTSADPTALVQEIRLLEKHQKKLGEEANQALDLIHKEVTSHKLGDQQAAEKVAKMLSEIRDMQKSNLLTEEIVVGDKANLKEEINRLNSQEIAALEKKLECVQNTIDMLVSSFQTDEQTPDFRTQVKKKRLLPFGLSNSPNLQHMIRGPCSPLSGTENKDPESNVVSANSAPVSFGATPPKRDDNRCRTQSREGTPVSRQANSVDIKRMNRMYKNAAEENIRNIKSYVTGLKERVAKLQYQKQLLVCQVLELEANETGAASEYDATDESQMDWPLCFEEQRKQIIMLWHLCHISIIHRTQFYMLFKGDPADQIYMEVELRRLTWLEQHLAELGNASPALLGDEPASYVASSIRALKQEREYLAKRVNTKLGAEEREMLYLKWDVPPVGKQRRQQFINKLWTDPHNMQHVRESAEIVAKLVGFCDSGETIRKEMFELNFASPSDKKTWMMGWNFISNLLHL</sequence>
<gene>
    <name evidence="17" type="primary">KIN7B</name>
    <name evidence="19" type="synonym">NACK2</name>
    <name evidence="13" type="synonym">STD</name>
    <name evidence="21 22 23 24" type="synonym">TES</name>
    <name evidence="18" type="ordered locus">At3g43210</name>
    <name evidence="20" type="ORF">F7K15.60</name>
</gene>
<reference key="1">
    <citation type="journal article" date="2002" name="Cell">
        <title>Expansion of the cell plate in plant cytokinesis requires a kinesin-like protein/MAPKKK complex.</title>
        <authorList>
            <person name="Nishihama R."/>
            <person name="Soyano T."/>
            <person name="Ishikawa M."/>
            <person name="Araki S."/>
            <person name="Tanaka H."/>
            <person name="Asada T."/>
            <person name="Irie K."/>
            <person name="Ito M."/>
            <person name="Terada M."/>
            <person name="Banno H."/>
            <person name="Yamazaki Y."/>
            <person name="Machida Y."/>
        </authorList>
    </citation>
    <scope>NUCLEOTIDE SEQUENCE [MRNA]</scope>
    <source>
        <strain>cv. Columbia</strain>
    </source>
</reference>
<reference key="2">
    <citation type="journal article" date="2003" name="Plant J.">
        <title>TETRASPORE encodes a kinesin required for male meiotic cytokinesis in Arabidopsis.</title>
        <authorList>
            <person name="Yang C.Y."/>
            <person name="Spielman M."/>
            <person name="Coles J.P."/>
            <person name="Li Y."/>
            <person name="Ghelani S."/>
            <person name="Bourdon V."/>
            <person name="Brown R.C."/>
            <person name="Lemmon B.E."/>
            <person name="Scott R.J."/>
            <person name="Dickinson H.G."/>
        </authorList>
    </citation>
    <scope>NUCLEOTIDE SEQUENCE [GENOMIC DNA / MRNA]</scope>
    <scope>FUNCTION</scope>
    <scope>DISRUPTION PHENOTYPE</scope>
    <source>
        <strain>cv. Col-3</strain>
        <strain>cv. Landsberg erecta</strain>
        <strain>cv. Wassilewskija-2</strain>
        <tissue>Flower</tissue>
    </source>
</reference>
<reference key="3">
    <citation type="journal article" date="2000" name="Nature">
        <title>Sequence and analysis of chromosome 3 of the plant Arabidopsis thaliana.</title>
        <authorList>
            <person name="Salanoubat M."/>
            <person name="Lemcke K."/>
            <person name="Rieger M."/>
            <person name="Ansorge W."/>
            <person name="Unseld M."/>
            <person name="Fartmann B."/>
            <person name="Valle G."/>
            <person name="Bloecker H."/>
            <person name="Perez-Alonso M."/>
            <person name="Obermaier B."/>
            <person name="Delseny M."/>
            <person name="Boutry M."/>
            <person name="Grivell L.A."/>
            <person name="Mache R."/>
            <person name="Puigdomenech P."/>
            <person name="De Simone V."/>
            <person name="Choisne N."/>
            <person name="Artiguenave F."/>
            <person name="Robert C."/>
            <person name="Brottier P."/>
            <person name="Wincker P."/>
            <person name="Cattolico L."/>
            <person name="Weissenbach J."/>
            <person name="Saurin W."/>
            <person name="Quetier F."/>
            <person name="Schaefer M."/>
            <person name="Mueller-Auer S."/>
            <person name="Gabel C."/>
            <person name="Fuchs M."/>
            <person name="Benes V."/>
            <person name="Wurmbach E."/>
            <person name="Drzonek H."/>
            <person name="Erfle H."/>
            <person name="Jordan N."/>
            <person name="Bangert S."/>
            <person name="Wiedelmann R."/>
            <person name="Kranz H."/>
            <person name="Voss H."/>
            <person name="Holland R."/>
            <person name="Brandt P."/>
            <person name="Nyakatura G."/>
            <person name="Vezzi A."/>
            <person name="D'Angelo M."/>
            <person name="Pallavicini A."/>
            <person name="Toppo S."/>
            <person name="Simionati B."/>
            <person name="Conrad A."/>
            <person name="Hornischer K."/>
            <person name="Kauer G."/>
            <person name="Loehnert T.-H."/>
            <person name="Nordsiek G."/>
            <person name="Reichelt J."/>
            <person name="Scharfe M."/>
            <person name="Schoen O."/>
            <person name="Bargues M."/>
            <person name="Terol J."/>
            <person name="Climent J."/>
            <person name="Navarro P."/>
            <person name="Collado C."/>
            <person name="Perez-Perez A."/>
            <person name="Ottenwaelder B."/>
            <person name="Duchemin D."/>
            <person name="Cooke R."/>
            <person name="Laudie M."/>
            <person name="Berger-Llauro C."/>
            <person name="Purnelle B."/>
            <person name="Masuy D."/>
            <person name="de Haan M."/>
            <person name="Maarse A.C."/>
            <person name="Alcaraz J.-P."/>
            <person name="Cottet A."/>
            <person name="Casacuberta E."/>
            <person name="Monfort A."/>
            <person name="Argiriou A."/>
            <person name="Flores M."/>
            <person name="Liguori R."/>
            <person name="Vitale D."/>
            <person name="Mannhaupt G."/>
            <person name="Haase D."/>
            <person name="Schoof H."/>
            <person name="Rudd S."/>
            <person name="Zaccaria P."/>
            <person name="Mewes H.-W."/>
            <person name="Mayer K.F.X."/>
            <person name="Kaul S."/>
            <person name="Town C.D."/>
            <person name="Koo H.L."/>
            <person name="Tallon L.J."/>
            <person name="Jenkins J."/>
            <person name="Rooney T."/>
            <person name="Rizzo M."/>
            <person name="Walts A."/>
            <person name="Utterback T."/>
            <person name="Fujii C.Y."/>
            <person name="Shea T.P."/>
            <person name="Creasy T.H."/>
            <person name="Haas B."/>
            <person name="Maiti R."/>
            <person name="Wu D."/>
            <person name="Peterson J."/>
            <person name="Van Aken S."/>
            <person name="Pai G."/>
            <person name="Militscher J."/>
            <person name="Sellers P."/>
            <person name="Gill J.E."/>
            <person name="Feldblyum T.V."/>
            <person name="Preuss D."/>
            <person name="Lin X."/>
            <person name="Nierman W.C."/>
            <person name="Salzberg S.L."/>
            <person name="White O."/>
            <person name="Venter J.C."/>
            <person name="Fraser C.M."/>
            <person name="Kaneko T."/>
            <person name="Nakamura Y."/>
            <person name="Sato S."/>
            <person name="Kato T."/>
            <person name="Asamizu E."/>
            <person name="Sasamoto S."/>
            <person name="Kimura T."/>
            <person name="Idesawa K."/>
            <person name="Kawashima K."/>
            <person name="Kishida Y."/>
            <person name="Kiyokawa C."/>
            <person name="Kohara M."/>
            <person name="Matsumoto M."/>
            <person name="Matsuno A."/>
            <person name="Muraki A."/>
            <person name="Nakayama S."/>
            <person name="Nakazaki N."/>
            <person name="Shinpo S."/>
            <person name="Takeuchi C."/>
            <person name="Wada T."/>
            <person name="Watanabe A."/>
            <person name="Yamada M."/>
            <person name="Yasuda M."/>
            <person name="Tabata S."/>
        </authorList>
    </citation>
    <scope>NUCLEOTIDE SEQUENCE [LARGE SCALE GENOMIC DNA]</scope>
    <source>
        <strain>cv. Columbia</strain>
    </source>
</reference>
<reference key="4">
    <citation type="journal article" date="2017" name="Plant J.">
        <title>Araport11: a complete reannotation of the Arabidopsis thaliana reference genome.</title>
        <authorList>
            <person name="Cheng C.Y."/>
            <person name="Krishnakumar V."/>
            <person name="Chan A.P."/>
            <person name="Thibaud-Nissen F."/>
            <person name="Schobel S."/>
            <person name="Town C.D."/>
        </authorList>
    </citation>
    <scope>GENOME REANNOTATION</scope>
    <source>
        <strain>cv. Columbia</strain>
    </source>
</reference>
<reference key="5">
    <citation type="journal article" date="1997" name="Development">
        <title>TETRASPORE is required for male meiotic cytokinesis in Arabidopsis thaliana.</title>
        <authorList>
            <person name="Spielman M."/>
            <person name="Preuss D."/>
            <person name="Li F.L."/>
            <person name="Browne W.E."/>
            <person name="Scott R.J."/>
            <person name="Dickinson H.G."/>
        </authorList>
    </citation>
    <scope>FUNCTION</scope>
    <scope>DISRUPTION PHENOTYPE</scope>
</reference>
<reference key="6">
    <citation type="journal article" date="1997" name="Dev. Biol.">
        <title>The STUD gene is required for male-specific cytokinesis after telophase II of meiosis in Arabidopsis thaliana.</title>
        <authorList>
            <person name="Hulskamp M."/>
            <person name="Parekh N.S."/>
            <person name="Grini P."/>
            <person name="Schneitz K."/>
            <person name="Zimmermann I."/>
            <person name="Lolle S.J."/>
            <person name="Pruitt R.E."/>
        </authorList>
    </citation>
    <scope>FUNCTION</scope>
    <scope>DISRUPTION PHENOTYPE</scope>
</reference>
<reference key="7">
    <citation type="journal article" date="2001" name="BMC Genomics">
        <title>Kinesins in the Arabidopsis genome: a comparative analysis among eukaryotes.</title>
        <authorList>
            <person name="Reddy A.S."/>
            <person name="Day I.S."/>
        </authorList>
    </citation>
    <scope>GENE FAMILY</scope>
</reference>
<reference key="8">
    <citation type="journal article" date="2004" name="Genes Cells">
        <title>The AtNACK1/HINKEL and STUD/TETRASPORE/AtNACK2 genes, which encode functionally redundant kinesins, are essential for cytokinesis in Arabidopsis.</title>
        <authorList>
            <person name="Tanaka H."/>
            <person name="Ishikawa M."/>
            <person name="Kitamura S."/>
            <person name="Takahashi Y."/>
            <person name="Soyano T."/>
            <person name="Machida C."/>
            <person name="Machida Y."/>
        </authorList>
    </citation>
    <scope>FUNCTION</scope>
    <scope>TISSUE SPECIFICITY</scope>
    <scope>DISRUPTION PHENOTYPE</scope>
</reference>
<reference key="9">
    <citation type="journal article" date="2006" name="BMC Genomics">
        <title>Comprehensive comparative analysis of kinesins in photosynthetic eukaryotes.</title>
        <authorList>
            <person name="Richardson D.N."/>
            <person name="Simmons M.P."/>
            <person name="Reddy A.S."/>
        </authorList>
    </citation>
    <scope>GENE FAMILY</scope>
    <scope>NOMENCLATURE</scope>
</reference>
<reference key="10">
    <citation type="journal article" date="2008" name="Mol. Plant">
        <title>Arabidopsis kinesins HINKEL and TETRASPORE act redundantly to control cell plate expansion during cytokinesis in the male gametophyte.</title>
        <authorList>
            <person name="Oh S.A."/>
            <person name="Bourdon V."/>
            <person name="Das 'Pal M."/>
            <person name="Dickinson H."/>
            <person name="Twell D."/>
        </authorList>
    </citation>
    <scope>FUNCTION</scope>
</reference>
<reference key="11">
    <citation type="journal article" date="2010" name="Plant Cell Physiol.">
        <title>HINKEL kinesin, ANP MAPKKKs and MKK6/ANQ MAPKK, which phosphorylates and activates MPK4 MAPK, constitute a pathway that is required for cytokinesis in Arabidopsis thaliana.</title>
        <authorList>
            <person name="Takahashi Y."/>
            <person name="Soyano T."/>
            <person name="Kosetsu K."/>
            <person name="Sasabe M."/>
            <person name="Machida Y."/>
        </authorList>
    </citation>
    <scope>FUNCTION</scope>
</reference>
<reference key="12">
    <citation type="journal article" date="2011" name="Plant J.">
        <title>AtMPK4 is required for male-specific meiotic cytokinesis in Arabidopsis.</title>
        <authorList>
            <person name="Zeng Q."/>
            <person name="Chen J.G."/>
            <person name="Ellis B.E."/>
        </authorList>
    </citation>
    <scope>FUNCTION</scope>
    <scope>INTERACTION WITH ANP3</scope>
    <scope>DISRUPTION PHENOTYPE</scope>
</reference>
<reference key="13">
    <citation type="journal article" date="2012" name="Protoplasma">
        <title>Functions of the Arabidopsis kinesin superfamily of microtubule-based motor proteins.</title>
        <authorList>
            <person name="Zhu C."/>
            <person name="Dixit R."/>
        </authorList>
    </citation>
    <scope>REVIEW</scope>
</reference>
<reference key="14">
    <citation type="journal article" date="2014" name="Plant Reprod.">
        <title>Arabidopsis Fused kinase TWO-IN-ONE dominantly inhibits male meiotic cytokinesis.</title>
        <authorList>
            <person name="Oh S.A."/>
            <person name="Bourdon V."/>
            <person name="Dickinson H.G."/>
            <person name="Twell D."/>
            <person name="Park S.K."/>
        </authorList>
    </citation>
    <scope>INTERACTION WITH TIO/FU</scope>
</reference>
<dbReference type="EMBL" id="AB088121">
    <property type="protein sequence ID" value="BAC03248.1"/>
    <property type="molecule type" value="mRNA"/>
</dbReference>
<dbReference type="EMBL" id="AJ495781">
    <property type="protein sequence ID" value="CAD42234.1"/>
    <property type="status" value="ALT_INIT"/>
    <property type="molecule type" value="mRNA"/>
</dbReference>
<dbReference type="EMBL" id="AJ496182">
    <property type="protein sequence ID" value="CAD42658.1"/>
    <property type="status" value="ALT_INIT"/>
    <property type="molecule type" value="Genomic_DNA"/>
</dbReference>
<dbReference type="EMBL" id="AJ508243">
    <property type="protein sequence ID" value="CAD48111.1"/>
    <property type="status" value="ALT_INIT"/>
    <property type="molecule type" value="Genomic_DNA"/>
</dbReference>
<dbReference type="EMBL" id="AJ507734">
    <property type="protein sequence ID" value="CAD45645.1"/>
    <property type="status" value="ALT_INIT"/>
    <property type="molecule type" value="Genomic_DNA"/>
</dbReference>
<dbReference type="EMBL" id="AL353871">
    <property type="protein sequence ID" value="CAB89042.1"/>
    <property type="status" value="ALT_SEQ"/>
    <property type="molecule type" value="Genomic_DNA"/>
</dbReference>
<dbReference type="EMBL" id="CP002686">
    <property type="protein sequence ID" value="AEE77774.1"/>
    <property type="molecule type" value="Genomic_DNA"/>
</dbReference>
<dbReference type="EMBL" id="CP002686">
    <property type="protein sequence ID" value="ANM65967.1"/>
    <property type="molecule type" value="Genomic_DNA"/>
</dbReference>
<dbReference type="EMBL" id="CP002686">
    <property type="protein sequence ID" value="ANM65968.1"/>
    <property type="molecule type" value="Genomic_DNA"/>
</dbReference>
<dbReference type="EMBL" id="CP002686">
    <property type="protein sequence ID" value="ANM65969.1"/>
    <property type="molecule type" value="Genomic_DNA"/>
</dbReference>
<dbReference type="EMBL" id="CP002686">
    <property type="protein sequence ID" value="ANM65970.1"/>
    <property type="molecule type" value="Genomic_DNA"/>
</dbReference>
<dbReference type="PIR" id="T49235">
    <property type="entry name" value="T49235"/>
</dbReference>
<dbReference type="RefSeq" id="NP_001319676.1">
    <property type="nucleotide sequence ID" value="NM_001339092.1"/>
</dbReference>
<dbReference type="RefSeq" id="NP_001327899.1">
    <property type="nucleotide sequence ID" value="NM_001339094.1"/>
</dbReference>
<dbReference type="RefSeq" id="NP_001327900.1">
    <property type="nucleotide sequence ID" value="NM_001339093.1"/>
</dbReference>
<dbReference type="RefSeq" id="NP_001327901.1">
    <property type="nucleotide sequence ID" value="NM_001339095.1"/>
</dbReference>
<dbReference type="RefSeq" id="NP_189907.2">
    <property type="nucleotide sequence ID" value="NM_114189.3"/>
</dbReference>
<dbReference type="SMR" id="Q8LNZ2"/>
<dbReference type="BioGRID" id="8718">
    <property type="interactions" value="2"/>
</dbReference>
<dbReference type="FunCoup" id="Q8LNZ2">
    <property type="interactions" value="190"/>
</dbReference>
<dbReference type="STRING" id="3702.Q8LNZ2"/>
<dbReference type="GlyGen" id="Q8LNZ2">
    <property type="glycosylation" value="1 site"/>
</dbReference>
<dbReference type="iPTMnet" id="Q8LNZ2"/>
<dbReference type="PaxDb" id="3702-AT3G43210.1"/>
<dbReference type="ProteomicsDB" id="250697"/>
<dbReference type="EnsemblPlants" id="AT3G43210.1">
    <property type="protein sequence ID" value="AT3G43210.1"/>
    <property type="gene ID" value="AT3G43210"/>
</dbReference>
<dbReference type="EnsemblPlants" id="AT3G43210.2">
    <property type="protein sequence ID" value="AT3G43210.2"/>
    <property type="gene ID" value="AT3G43210"/>
</dbReference>
<dbReference type="EnsemblPlants" id="AT3G43210.3">
    <property type="protein sequence ID" value="AT3G43210.3"/>
    <property type="gene ID" value="AT3G43210"/>
</dbReference>
<dbReference type="EnsemblPlants" id="AT3G43210.4">
    <property type="protein sequence ID" value="AT3G43210.4"/>
    <property type="gene ID" value="AT3G43210"/>
</dbReference>
<dbReference type="EnsemblPlants" id="AT3G43210.5">
    <property type="protein sequence ID" value="AT3G43210.5"/>
    <property type="gene ID" value="AT3G43210"/>
</dbReference>
<dbReference type="GeneID" id="823396"/>
<dbReference type="Gramene" id="AT3G43210.1">
    <property type="protein sequence ID" value="AT3G43210.1"/>
    <property type="gene ID" value="AT3G43210"/>
</dbReference>
<dbReference type="Gramene" id="AT3G43210.2">
    <property type="protein sequence ID" value="AT3G43210.2"/>
    <property type="gene ID" value="AT3G43210"/>
</dbReference>
<dbReference type="Gramene" id="AT3G43210.3">
    <property type="protein sequence ID" value="AT3G43210.3"/>
    <property type="gene ID" value="AT3G43210"/>
</dbReference>
<dbReference type="Gramene" id="AT3G43210.4">
    <property type="protein sequence ID" value="AT3G43210.4"/>
    <property type="gene ID" value="AT3G43210"/>
</dbReference>
<dbReference type="Gramene" id="AT3G43210.5">
    <property type="protein sequence ID" value="AT3G43210.5"/>
    <property type="gene ID" value="AT3G43210"/>
</dbReference>
<dbReference type="KEGG" id="ath:AT3G43210"/>
<dbReference type="Araport" id="AT3G43210"/>
<dbReference type="TAIR" id="AT3G43210">
    <property type="gene designation" value="TES"/>
</dbReference>
<dbReference type="eggNOG" id="KOG0242">
    <property type="taxonomic scope" value="Eukaryota"/>
</dbReference>
<dbReference type="HOGENOM" id="CLU_013407_0_0_1"/>
<dbReference type="InParanoid" id="Q8LNZ2"/>
<dbReference type="OMA" id="LCHVSIV"/>
<dbReference type="OrthoDB" id="3176171at2759"/>
<dbReference type="PhylomeDB" id="Q8LNZ2"/>
<dbReference type="PRO" id="PR:Q8LNZ2"/>
<dbReference type="Proteomes" id="UP000006548">
    <property type="component" value="Chromosome 3"/>
</dbReference>
<dbReference type="ExpressionAtlas" id="Q8LNZ2">
    <property type="expression patterns" value="baseline and differential"/>
</dbReference>
<dbReference type="GO" id="GO:0005874">
    <property type="term" value="C:microtubule"/>
    <property type="evidence" value="ECO:0007669"/>
    <property type="project" value="UniProtKB-KW"/>
</dbReference>
<dbReference type="GO" id="GO:0009524">
    <property type="term" value="C:phragmoplast"/>
    <property type="evidence" value="ECO:0007669"/>
    <property type="project" value="UniProtKB-SubCell"/>
</dbReference>
<dbReference type="GO" id="GO:0009506">
    <property type="term" value="C:plasmodesma"/>
    <property type="evidence" value="ECO:0007005"/>
    <property type="project" value="TAIR"/>
</dbReference>
<dbReference type="GO" id="GO:0005524">
    <property type="term" value="F:ATP binding"/>
    <property type="evidence" value="ECO:0007669"/>
    <property type="project" value="UniProtKB-KW"/>
</dbReference>
<dbReference type="GO" id="GO:0008017">
    <property type="term" value="F:microtubule binding"/>
    <property type="evidence" value="ECO:0007669"/>
    <property type="project" value="InterPro"/>
</dbReference>
<dbReference type="GO" id="GO:0003777">
    <property type="term" value="F:microtubule motor activity"/>
    <property type="evidence" value="ECO:0000250"/>
    <property type="project" value="TAIR"/>
</dbReference>
<dbReference type="GO" id="GO:0000911">
    <property type="term" value="P:cytokinesis by cell plate formation"/>
    <property type="evidence" value="ECO:0000316"/>
    <property type="project" value="TAIR"/>
</dbReference>
<dbReference type="GO" id="GO:0009558">
    <property type="term" value="P:embryo sac cellularization"/>
    <property type="evidence" value="ECO:0000316"/>
    <property type="project" value="TAIR"/>
</dbReference>
<dbReference type="GO" id="GO:0048229">
    <property type="term" value="P:gametophyte development"/>
    <property type="evidence" value="ECO:0000316"/>
    <property type="project" value="TAIR"/>
</dbReference>
<dbReference type="GO" id="GO:0007112">
    <property type="term" value="P:male meiosis cytokinesis"/>
    <property type="evidence" value="ECO:0000315"/>
    <property type="project" value="TAIR"/>
</dbReference>
<dbReference type="GO" id="GO:0007018">
    <property type="term" value="P:microtubule-based movement"/>
    <property type="evidence" value="ECO:0007669"/>
    <property type="project" value="InterPro"/>
</dbReference>
<dbReference type="GO" id="GO:0009555">
    <property type="term" value="P:pollen development"/>
    <property type="evidence" value="ECO:0000316"/>
    <property type="project" value="TAIR"/>
</dbReference>
<dbReference type="GO" id="GO:0010245">
    <property type="term" value="P:radial microtubular system formation"/>
    <property type="evidence" value="ECO:0000315"/>
    <property type="project" value="TAIR"/>
</dbReference>
<dbReference type="CDD" id="cd01374">
    <property type="entry name" value="KISc_CENP_E"/>
    <property type="match status" value="1"/>
</dbReference>
<dbReference type="FunFam" id="3.40.850.10:FF:000016">
    <property type="entry name" value="Kinesin-like protein"/>
    <property type="match status" value="1"/>
</dbReference>
<dbReference type="Gene3D" id="3.40.850.10">
    <property type="entry name" value="Kinesin motor domain"/>
    <property type="match status" value="1"/>
</dbReference>
<dbReference type="InterPro" id="IPR027640">
    <property type="entry name" value="Kinesin-like_fam"/>
</dbReference>
<dbReference type="InterPro" id="IPR019821">
    <property type="entry name" value="Kinesin_motor_CS"/>
</dbReference>
<dbReference type="InterPro" id="IPR001752">
    <property type="entry name" value="Kinesin_motor_dom"/>
</dbReference>
<dbReference type="InterPro" id="IPR036961">
    <property type="entry name" value="Kinesin_motor_dom_sf"/>
</dbReference>
<dbReference type="InterPro" id="IPR021881">
    <property type="entry name" value="NACK_C"/>
</dbReference>
<dbReference type="InterPro" id="IPR027417">
    <property type="entry name" value="P-loop_NTPase"/>
</dbReference>
<dbReference type="PANTHER" id="PTHR47968">
    <property type="entry name" value="CENTROMERE PROTEIN E"/>
    <property type="match status" value="1"/>
</dbReference>
<dbReference type="PANTHER" id="PTHR47968:SF39">
    <property type="entry name" value="KINESIN-LIKE PROTEIN KIN-7B"/>
    <property type="match status" value="1"/>
</dbReference>
<dbReference type="Pfam" id="PF11995">
    <property type="entry name" value="DUF3490"/>
    <property type="match status" value="1"/>
</dbReference>
<dbReference type="Pfam" id="PF00225">
    <property type="entry name" value="Kinesin"/>
    <property type="match status" value="1"/>
</dbReference>
<dbReference type="PRINTS" id="PR00380">
    <property type="entry name" value="KINESINHEAVY"/>
</dbReference>
<dbReference type="SMART" id="SM00129">
    <property type="entry name" value="KISc"/>
    <property type="match status" value="1"/>
</dbReference>
<dbReference type="SUPFAM" id="SSF52540">
    <property type="entry name" value="P-loop containing nucleoside triphosphate hydrolases"/>
    <property type="match status" value="1"/>
</dbReference>
<dbReference type="PROSITE" id="PS00411">
    <property type="entry name" value="KINESIN_MOTOR_1"/>
    <property type="match status" value="1"/>
</dbReference>
<dbReference type="PROSITE" id="PS50067">
    <property type="entry name" value="KINESIN_MOTOR_2"/>
    <property type="match status" value="1"/>
</dbReference>
<evidence type="ECO:0000250" key="1">
    <source>
        <dbReference type="UniProtKB" id="Q8S905"/>
    </source>
</evidence>
<evidence type="ECO:0000255" key="2"/>
<evidence type="ECO:0000255" key="3">
    <source>
        <dbReference type="PROSITE-ProRule" id="PRU00283"/>
    </source>
</evidence>
<evidence type="ECO:0000256" key="4">
    <source>
        <dbReference type="SAM" id="MobiDB-lite"/>
    </source>
</evidence>
<evidence type="ECO:0000269" key="5">
    <source>
    </source>
</evidence>
<evidence type="ECO:0000269" key="6">
    <source>
    </source>
</evidence>
<evidence type="ECO:0000269" key="7">
    <source>
    </source>
</evidence>
<evidence type="ECO:0000269" key="8">
    <source>
    </source>
</evidence>
<evidence type="ECO:0000269" key="9">
    <source>
    </source>
</evidence>
<evidence type="ECO:0000269" key="10">
    <source>
    </source>
</evidence>
<evidence type="ECO:0000269" key="11">
    <source>
    </source>
</evidence>
<evidence type="ECO:0000269" key="12">
    <source>
    </source>
</evidence>
<evidence type="ECO:0000303" key="13">
    <source>
    </source>
</evidence>
<evidence type="ECO:0000303" key="14">
    <source>
    </source>
</evidence>
<evidence type="ECO:0000303" key="15">
    <source>
    </source>
</evidence>
<evidence type="ECO:0000303" key="16">
    <source>
    </source>
</evidence>
<evidence type="ECO:0000305" key="17"/>
<evidence type="ECO:0000312" key="18">
    <source>
        <dbReference type="Araport" id="AT3G43210"/>
    </source>
</evidence>
<evidence type="ECO:0000312" key="19">
    <source>
        <dbReference type="EMBL" id="BAC03248.1"/>
    </source>
</evidence>
<evidence type="ECO:0000312" key="20">
    <source>
        <dbReference type="EMBL" id="CAB89042.1"/>
    </source>
</evidence>
<evidence type="ECO:0000312" key="21">
    <source>
        <dbReference type="EMBL" id="CAD42234.1"/>
    </source>
</evidence>
<evidence type="ECO:0000312" key="22">
    <source>
        <dbReference type="EMBL" id="CAD42658.1"/>
    </source>
</evidence>
<evidence type="ECO:0000312" key="23">
    <source>
        <dbReference type="EMBL" id="CAD45645.1"/>
    </source>
</evidence>
<evidence type="ECO:0000312" key="24">
    <source>
        <dbReference type="EMBL" id="CAD48111.1"/>
    </source>
</evidence>
<organism>
    <name type="scientific">Arabidopsis thaliana</name>
    <name type="common">Mouse-ear cress</name>
    <dbReference type="NCBI Taxonomy" id="3702"/>
    <lineage>
        <taxon>Eukaryota</taxon>
        <taxon>Viridiplantae</taxon>
        <taxon>Streptophyta</taxon>
        <taxon>Embryophyta</taxon>
        <taxon>Tracheophyta</taxon>
        <taxon>Spermatophyta</taxon>
        <taxon>Magnoliopsida</taxon>
        <taxon>eudicotyledons</taxon>
        <taxon>Gunneridae</taxon>
        <taxon>Pentapetalae</taxon>
        <taxon>rosids</taxon>
        <taxon>malvids</taxon>
        <taxon>Brassicales</taxon>
        <taxon>Brassicaceae</taxon>
        <taxon>Camelineae</taxon>
        <taxon>Arabidopsis</taxon>
    </lineage>
</organism>
<name>KN7B_ARATH</name>
<proteinExistence type="evidence at protein level"/>
<feature type="chain" id="PRO_0000422317" description="Kinesin-like protein KIN-7B">
    <location>
        <begin position="1"/>
        <end position="938"/>
    </location>
</feature>
<feature type="domain" description="Kinesin motor" evidence="3">
    <location>
        <begin position="29"/>
        <end position="348"/>
    </location>
</feature>
<feature type="region of interest" description="Disordered" evidence="4">
    <location>
        <begin position="450"/>
        <end position="481"/>
    </location>
</feature>
<feature type="region of interest" description="Disordered" evidence="4">
    <location>
        <begin position="628"/>
        <end position="678"/>
    </location>
</feature>
<feature type="coiled-coil region" evidence="2">
    <location>
        <begin position="357"/>
        <end position="431"/>
    </location>
</feature>
<feature type="coiled-coil region" evidence="2">
    <location>
        <begin position="555"/>
        <end position="590"/>
    </location>
</feature>
<feature type="compositionally biased region" description="Low complexity" evidence="4">
    <location>
        <begin position="641"/>
        <end position="652"/>
    </location>
</feature>
<feature type="compositionally biased region" description="Basic and acidic residues" evidence="4">
    <location>
        <begin position="658"/>
        <end position="669"/>
    </location>
</feature>
<feature type="binding site" evidence="3">
    <location>
        <begin position="113"/>
        <end position="120"/>
    </location>
    <ligand>
        <name>ATP</name>
        <dbReference type="ChEBI" id="CHEBI:30616"/>
    </ligand>
</feature>
<feature type="sequence conflict" description="In Ref. 2; CAD42658/CAD45645." evidence="17" ref="2">
    <original>A</original>
    <variation>I</variation>
    <location>
        <position position="649"/>
    </location>
</feature>
<feature type="sequence conflict" description="In Ref. 2; CAD42658/CAD45645." evidence="17" ref="2">
    <original>Q</original>
    <variation>P</variation>
    <location>
        <position position="668"/>
    </location>
</feature>
<feature type="sequence conflict" description="In Ref. 2; CAD42658/CAD45645." evidence="17" ref="2">
    <original>Q</original>
    <variation>R</variation>
    <location>
        <position position="748"/>
    </location>
</feature>